<organism>
    <name type="scientific">Enterobacteria phage T4</name>
    <name type="common">Bacteriophage T4</name>
    <dbReference type="NCBI Taxonomy" id="10665"/>
    <lineage>
        <taxon>Viruses</taxon>
        <taxon>Duplodnaviria</taxon>
        <taxon>Heunggongvirae</taxon>
        <taxon>Uroviricota</taxon>
        <taxon>Caudoviricetes</taxon>
        <taxon>Straboviridae</taxon>
        <taxon>Tevenvirinae</taxon>
        <taxon>Tequatrovirus</taxon>
    </lineage>
</organism>
<sequence>MKNRLLLKEFQEKVKLFAQELVNKVSERFPETSVRVITETPRSVLVIVNPGDGDQISHLKLDFDGLVEAQRVYGVL</sequence>
<reference key="1">
    <citation type="journal article" date="2003" name="Microbiol. Mol. Biol. Rev.">
        <title>Bacteriophage T4 genome.</title>
        <authorList>
            <person name="Miller E.S."/>
            <person name="Kutter E."/>
            <person name="Mosig G."/>
            <person name="Arisaka F."/>
            <person name="Kunisawa T."/>
            <person name="Ruger W."/>
        </authorList>
    </citation>
    <scope>NUCLEOTIDE SEQUENCE [LARGE SCALE GENOMIC DNA]</scope>
</reference>
<protein>
    <recommendedName>
        <fullName>Uncharacterized 8.7 kDa protein in cd-pseT intergenic region</fullName>
    </recommendedName>
</protein>
<proteinExistence type="predicted"/>
<gene>
    <name type="primary">y13E</name>
    <name type="synonym">cd.2</name>
</gene>
<name>Y13E_BPT4</name>
<accession>P39498</accession>
<feature type="chain" id="PRO_0000165178" description="Uncharacterized 8.7 kDa protein in cd-pseT intergenic region">
    <location>
        <begin position="1"/>
        <end position="76"/>
    </location>
</feature>
<organismHost>
    <name type="scientific">Escherichia coli</name>
    <dbReference type="NCBI Taxonomy" id="562"/>
</organismHost>
<keyword id="KW-1185">Reference proteome</keyword>
<dbReference type="EMBL" id="AF158101">
    <property type="protein sequence ID" value="AAD42548.1"/>
    <property type="molecule type" value="Genomic_DNA"/>
</dbReference>
<dbReference type="RefSeq" id="NP_049830.1">
    <property type="nucleotide sequence ID" value="NC_000866.4"/>
</dbReference>
<dbReference type="SMR" id="P39498"/>
<dbReference type="GeneID" id="1258734"/>
<dbReference type="KEGG" id="vg:1258734"/>
<dbReference type="OrthoDB" id="21614at10239"/>
<dbReference type="Proteomes" id="UP000009087">
    <property type="component" value="Segment"/>
</dbReference>
<dbReference type="InterPro" id="IPR055744">
    <property type="entry name" value="DUF7320"/>
</dbReference>
<dbReference type="Pfam" id="PF24005">
    <property type="entry name" value="DUF7320"/>
    <property type="match status" value="1"/>
</dbReference>